<protein>
    <recommendedName>
        <fullName evidence="1">Alkanesulfonate monooxygenase</fullName>
        <ecNumber evidence="1">1.14.14.5</ecNumber>
    </recommendedName>
    <alternativeName>
        <fullName evidence="1">FMNH2-dependent aliphatic sulfonate monooxygenase</fullName>
    </alternativeName>
</protein>
<comment type="function">
    <text evidence="1">Catalyzes the desulfonation of aliphatic sulfonates.</text>
</comment>
<comment type="catalytic activity">
    <reaction evidence="1">
        <text>an alkanesulfonate + FMNH2 + O2 = an aldehyde + FMN + sulfite + H2O + 2 H(+)</text>
        <dbReference type="Rhea" id="RHEA:23064"/>
        <dbReference type="ChEBI" id="CHEBI:15377"/>
        <dbReference type="ChEBI" id="CHEBI:15378"/>
        <dbReference type="ChEBI" id="CHEBI:15379"/>
        <dbReference type="ChEBI" id="CHEBI:17359"/>
        <dbReference type="ChEBI" id="CHEBI:17478"/>
        <dbReference type="ChEBI" id="CHEBI:57618"/>
        <dbReference type="ChEBI" id="CHEBI:58210"/>
        <dbReference type="ChEBI" id="CHEBI:134249"/>
        <dbReference type="EC" id="1.14.14.5"/>
    </reaction>
</comment>
<comment type="subunit">
    <text evidence="1">Homotetramer.</text>
</comment>
<comment type="miscellaneous">
    <text evidence="1">FMNH(2) which is absolutely required for this enzymatic reaction, is provided by SsuE.</text>
</comment>
<comment type="similarity">
    <text evidence="1">Belongs to the SsuD family.</text>
</comment>
<gene>
    <name evidence="1" type="primary">ssuD</name>
    <name type="ordered locus">YPK_0422</name>
</gene>
<dbReference type="EC" id="1.14.14.5" evidence="1"/>
<dbReference type="EMBL" id="CP000950">
    <property type="protein sequence ID" value="ACA66725.1"/>
    <property type="molecule type" value="Genomic_DNA"/>
</dbReference>
<dbReference type="RefSeq" id="WP_011193183.1">
    <property type="nucleotide sequence ID" value="NZ_CP009792.1"/>
</dbReference>
<dbReference type="SMR" id="B1JKC0"/>
<dbReference type="GeneID" id="49784406"/>
<dbReference type="KEGG" id="ypy:YPK_0422"/>
<dbReference type="PATRIC" id="fig|502800.11.peg.1026"/>
<dbReference type="GO" id="GO:0008726">
    <property type="term" value="F:alkanesulfonate monooxygenase activity"/>
    <property type="evidence" value="ECO:0007669"/>
    <property type="project" value="UniProtKB-UniRule"/>
</dbReference>
<dbReference type="GO" id="GO:0046306">
    <property type="term" value="P:alkanesulfonate catabolic process"/>
    <property type="evidence" value="ECO:0007669"/>
    <property type="project" value="TreeGrafter"/>
</dbReference>
<dbReference type="CDD" id="cd01094">
    <property type="entry name" value="Alkanesulfonate_monoxygenase"/>
    <property type="match status" value="1"/>
</dbReference>
<dbReference type="FunFam" id="3.20.20.30:FF:000001">
    <property type="entry name" value="Alkanesulfonate monooxygenase"/>
    <property type="match status" value="1"/>
</dbReference>
<dbReference type="Gene3D" id="3.20.20.30">
    <property type="entry name" value="Luciferase-like domain"/>
    <property type="match status" value="1"/>
</dbReference>
<dbReference type="HAMAP" id="MF_01229">
    <property type="entry name" value="Alkanesulf_monooxygen"/>
    <property type="match status" value="1"/>
</dbReference>
<dbReference type="InterPro" id="IPR019911">
    <property type="entry name" value="Alkanesulphonate_mOase_FMN-dep"/>
</dbReference>
<dbReference type="InterPro" id="IPR011251">
    <property type="entry name" value="Luciferase-like_dom"/>
</dbReference>
<dbReference type="InterPro" id="IPR036661">
    <property type="entry name" value="Luciferase-like_sf"/>
</dbReference>
<dbReference type="InterPro" id="IPR050172">
    <property type="entry name" value="SsuD_RutA_monooxygenase"/>
</dbReference>
<dbReference type="NCBIfam" id="TIGR03565">
    <property type="entry name" value="alk_sulf_monoox"/>
    <property type="match status" value="1"/>
</dbReference>
<dbReference type="NCBIfam" id="NF001939">
    <property type="entry name" value="PRK00719.1"/>
    <property type="match status" value="1"/>
</dbReference>
<dbReference type="PANTHER" id="PTHR42847">
    <property type="entry name" value="ALKANESULFONATE MONOOXYGENASE"/>
    <property type="match status" value="1"/>
</dbReference>
<dbReference type="PANTHER" id="PTHR42847:SF4">
    <property type="entry name" value="ALKANESULFONATE MONOOXYGENASE-RELATED"/>
    <property type="match status" value="1"/>
</dbReference>
<dbReference type="Pfam" id="PF00296">
    <property type="entry name" value="Bac_luciferase"/>
    <property type="match status" value="1"/>
</dbReference>
<dbReference type="SUPFAM" id="SSF51679">
    <property type="entry name" value="Bacterial luciferase-like"/>
    <property type="match status" value="1"/>
</dbReference>
<feature type="chain" id="PRO_1000139630" description="Alkanesulfonate monooxygenase">
    <location>
        <begin position="1"/>
        <end position="382"/>
    </location>
</feature>
<keyword id="KW-0285">Flavoprotein</keyword>
<keyword id="KW-0288">FMN</keyword>
<keyword id="KW-0503">Monooxygenase</keyword>
<keyword id="KW-0560">Oxidoreductase</keyword>
<reference key="1">
    <citation type="submission" date="2008-02" db="EMBL/GenBank/DDBJ databases">
        <title>Complete sequence of Yersinia pseudotuberculosis YPIII.</title>
        <authorList>
            <consortium name="US DOE Joint Genome Institute"/>
            <person name="Copeland A."/>
            <person name="Lucas S."/>
            <person name="Lapidus A."/>
            <person name="Glavina del Rio T."/>
            <person name="Dalin E."/>
            <person name="Tice H."/>
            <person name="Bruce D."/>
            <person name="Goodwin L."/>
            <person name="Pitluck S."/>
            <person name="Munk A.C."/>
            <person name="Brettin T."/>
            <person name="Detter J.C."/>
            <person name="Han C."/>
            <person name="Tapia R."/>
            <person name="Schmutz J."/>
            <person name="Larimer F."/>
            <person name="Land M."/>
            <person name="Hauser L."/>
            <person name="Challacombe J.F."/>
            <person name="Green L."/>
            <person name="Lindler L.E."/>
            <person name="Nikolich M.P."/>
            <person name="Richardson P."/>
        </authorList>
    </citation>
    <scope>NUCLEOTIDE SEQUENCE [LARGE SCALE GENOMIC DNA]</scope>
    <source>
        <strain>YPIII</strain>
    </source>
</reference>
<organism>
    <name type="scientific">Yersinia pseudotuberculosis serotype O:3 (strain YPIII)</name>
    <dbReference type="NCBI Taxonomy" id="502800"/>
    <lineage>
        <taxon>Bacteria</taxon>
        <taxon>Pseudomonadati</taxon>
        <taxon>Pseudomonadota</taxon>
        <taxon>Gammaproteobacteria</taxon>
        <taxon>Enterobacterales</taxon>
        <taxon>Yersiniaceae</taxon>
        <taxon>Yersinia</taxon>
    </lineage>
</organism>
<sequence>MSINVFWFLPTHGDGHYLGSSEGARAVDYSYLQQIAQAADRLGFGGVLIPTGRSCEDSWLVAASLIPVTQRLKFLVALRPGIISPTLAARQAATLDRLSNGRALFNLVTGGDPEELAAEGLHLNHTERYEASAEFTHVWRKVLEGETVDFAGKHIQVKGAKLLFPPVQHPRPPLYFGGSSAAAQDLAAEQVELYLTWGETPEQVKEKIEEVRAKAAAKGRTVRFGIRLHVIVRETTEEAWRAANRLIANLDDKTIADAQQAFARFDSVGQQRMAALHGGKKDNLEISPNLWAGVGLVRGGAGTALVGDGPTVAQRIQEYADLGIDTFVFSGYPHLEEAYRVSELLFPHLDLATTELPTQRPATQPQGEVVANIYVPQKVSQS</sequence>
<proteinExistence type="inferred from homology"/>
<evidence type="ECO:0000255" key="1">
    <source>
        <dbReference type="HAMAP-Rule" id="MF_01229"/>
    </source>
</evidence>
<name>SSUD_YERPY</name>
<accession>B1JKC0</accession>